<dbReference type="EMBL" id="AB000129">
    <property type="protein sequence ID" value="BAA19768.1"/>
    <property type="molecule type" value="mRNA"/>
</dbReference>
<dbReference type="EMBL" id="CM000850">
    <property type="status" value="NOT_ANNOTATED_CDS"/>
    <property type="molecule type" value="Genomic_DNA"/>
</dbReference>
<dbReference type="PIR" id="T07078">
    <property type="entry name" value="T07078"/>
</dbReference>
<dbReference type="RefSeq" id="NP_001236644.1">
    <property type="nucleotide sequence ID" value="NM_001249715.1"/>
</dbReference>
<dbReference type="RefSeq" id="XP_006600235.1">
    <property type="nucleotide sequence ID" value="XM_006600172.4"/>
</dbReference>
<dbReference type="STRING" id="3847.O04132"/>
<dbReference type="PaxDb" id="3847-GLYMA17G24193.1"/>
<dbReference type="EnsemblPlants" id="KRH04799">
    <property type="protein sequence ID" value="KRH04799"/>
    <property type="gene ID" value="GLYMA_17G187600"/>
</dbReference>
<dbReference type="GeneID" id="547450"/>
<dbReference type="Gramene" id="KRH04799">
    <property type="protein sequence ID" value="KRH04799"/>
    <property type="gene ID" value="GLYMA_17G187600"/>
</dbReference>
<dbReference type="KEGG" id="gmx:547450"/>
<dbReference type="eggNOG" id="ENOG502S99J">
    <property type="taxonomic scope" value="Eukaryota"/>
</dbReference>
<dbReference type="InParanoid" id="O04132"/>
<dbReference type="OMA" id="HHTEEGH"/>
<dbReference type="Proteomes" id="UP000008827">
    <property type="component" value="Chromosome 17"/>
</dbReference>
<dbReference type="GO" id="GO:0046872">
    <property type="term" value="F:metal ion binding"/>
    <property type="evidence" value="ECO:0007669"/>
    <property type="project" value="UniProtKB-KW"/>
</dbReference>
<dbReference type="InterPro" id="IPR039285">
    <property type="entry name" value="HIRD11-like"/>
</dbReference>
<dbReference type="PANTHER" id="PTHR34941">
    <property type="entry name" value="DEHYDRIN HIRD11"/>
    <property type="match status" value="1"/>
</dbReference>
<dbReference type="PANTHER" id="PTHR34941:SF4">
    <property type="entry name" value="PROTEIN SRC1"/>
    <property type="match status" value="1"/>
</dbReference>
<feature type="chain" id="PRO_0000433972" description="Protein SRC1">
    <location>
        <begin position="1"/>
        <end position="102"/>
    </location>
</feature>
<feature type="repeat" description="1" evidence="7">
    <location>
        <begin position="21"/>
        <end position="24"/>
    </location>
</feature>
<feature type="repeat" description="2" evidence="7">
    <location>
        <begin position="25"/>
        <end position="28"/>
    </location>
</feature>
<feature type="repeat" description="3" evidence="7">
    <location>
        <begin position="29"/>
        <end position="32"/>
    </location>
</feature>
<feature type="repeat" description="4" evidence="7">
    <location>
        <begin position="33"/>
        <end position="36"/>
    </location>
</feature>
<feature type="repeat" description="5" evidence="7">
    <location>
        <begin position="37"/>
        <end position="40"/>
    </location>
</feature>
<feature type="repeat" description="6" evidence="7">
    <location>
        <begin position="41"/>
        <end position="44"/>
    </location>
</feature>
<feature type="repeat" description="7" evidence="7">
    <location>
        <begin position="45"/>
        <end position="48"/>
    </location>
</feature>
<feature type="repeat" description="8" evidence="7">
    <location>
        <begin position="49"/>
        <end position="53"/>
    </location>
</feature>
<feature type="repeat" description="9" evidence="7">
    <location>
        <begin position="54"/>
        <end position="58"/>
    </location>
</feature>
<feature type="region of interest" description="Disordered" evidence="2">
    <location>
        <begin position="1"/>
        <end position="102"/>
    </location>
</feature>
<feature type="region of interest" description="9 X approximate tandem repeats" evidence="7">
    <location>
        <begin position="21"/>
        <end position="58"/>
    </location>
</feature>
<feature type="compositionally biased region" description="Basic and acidic residues" evidence="2">
    <location>
        <begin position="1"/>
        <end position="76"/>
    </location>
</feature>
<feature type="compositionally biased region" description="Basic residues" evidence="2">
    <location>
        <begin position="77"/>
        <end position="95"/>
    </location>
</feature>
<reference key="1">
    <citation type="journal article" date="1997" name="Plant Sci.">
        <title>cDNA sequence analysis and expression of two cold-regulated genes in soybean.</title>
        <authorList>
            <person name="Takahashi R."/>
            <person name="Shimosaka E."/>
        </authorList>
    </citation>
    <scope>NUCLEOTIDE SEQUENCE [MRNA]</scope>
    <scope>INDUCTION</scope>
    <source>
        <strain>cv. Kitamusume</strain>
        <tissue>Leaf</tissue>
    </source>
</reference>
<reference key="2">
    <citation type="journal article" date="2010" name="Nature">
        <title>Genome sequence of the palaeopolyploid soybean.</title>
        <authorList>
            <person name="Schmutz J."/>
            <person name="Cannon S.B."/>
            <person name="Schlueter J."/>
            <person name="Ma J."/>
            <person name="Mitros T."/>
            <person name="Nelson W."/>
            <person name="Hyten D.L."/>
            <person name="Song Q."/>
            <person name="Thelen J.J."/>
            <person name="Cheng J."/>
            <person name="Xu D."/>
            <person name="Hellsten U."/>
            <person name="May G.D."/>
            <person name="Yu Y."/>
            <person name="Sakurai T."/>
            <person name="Umezawa T."/>
            <person name="Bhattacharyya M.K."/>
            <person name="Sandhu D."/>
            <person name="Valliyodan B."/>
            <person name="Lindquist E."/>
            <person name="Peto M."/>
            <person name="Grant D."/>
            <person name="Shu S."/>
            <person name="Goodstein D."/>
            <person name="Barry K."/>
            <person name="Futrell-Griggs M."/>
            <person name="Abernathy B."/>
            <person name="Du J."/>
            <person name="Tian Z."/>
            <person name="Zhu L."/>
            <person name="Gill N."/>
            <person name="Joshi T."/>
            <person name="Libault M."/>
            <person name="Sethuraman A."/>
            <person name="Zhang X.-C."/>
            <person name="Shinozaki K."/>
            <person name="Nguyen H.T."/>
            <person name="Wing R.A."/>
            <person name="Cregan P."/>
            <person name="Specht J."/>
            <person name="Grimwood J."/>
            <person name="Rokhsar D."/>
            <person name="Stacey G."/>
            <person name="Shoemaker R.C."/>
            <person name="Jackson S.A."/>
        </authorList>
    </citation>
    <scope>NUCLEOTIDE SEQUENCE [LARGE SCALE GENOMIC DNA]</scope>
    <source>
        <strain>cv. Williams 82</strain>
    </source>
</reference>
<reference key="3">
    <citation type="journal article" date="2004" name="J. Exp. Bot.">
        <title>Molecular cloning of low-temperature-inducible ribosomal proteins from soybean.</title>
        <authorList>
            <person name="Kim K.Y."/>
            <person name="Park S.W."/>
            <person name="Chung Y.S."/>
            <person name="Chung C.H."/>
            <person name="Kim J.I."/>
            <person name="Lee J.H."/>
        </authorList>
    </citation>
    <scope>INDUCTION BY COLD STRESS</scope>
</reference>
<protein>
    <recommendedName>
        <fullName evidence="6">Protein SRC1</fullName>
    </recommendedName>
    <alternativeName>
        <fullName evidence="5">Protein SOYBEAN GENE REGULATED BY COLD 1</fullName>
    </alternativeName>
</protein>
<organism>
    <name type="scientific">Glycine max</name>
    <name type="common">Soybean</name>
    <name type="synonym">Glycine hispida</name>
    <dbReference type="NCBI Taxonomy" id="3847"/>
    <lineage>
        <taxon>Eukaryota</taxon>
        <taxon>Viridiplantae</taxon>
        <taxon>Streptophyta</taxon>
        <taxon>Embryophyta</taxon>
        <taxon>Tracheophyta</taxon>
        <taxon>Spermatophyta</taxon>
        <taxon>Magnoliopsida</taxon>
        <taxon>eudicotyledons</taxon>
        <taxon>Gunneridae</taxon>
        <taxon>Pentapetalae</taxon>
        <taxon>rosids</taxon>
        <taxon>fabids</taxon>
        <taxon>Fabales</taxon>
        <taxon>Fabaceae</taxon>
        <taxon>Papilionoideae</taxon>
        <taxon>50 kb inversion clade</taxon>
        <taxon>NPAAA clade</taxon>
        <taxon>indigoferoid/millettioid clade</taxon>
        <taxon>Phaseoleae</taxon>
        <taxon>Glycine</taxon>
        <taxon>Glycine subgen. Soja</taxon>
    </lineage>
</organism>
<sequence length="102" mass="11556">MSGIIHKIEETLHVGGHKKEEHKGEHHGEHKGEHKGEHHGEHKGEHKGEQHHGEHKEGLVDKIKDKIHGDGHDKGEKKKKKDKKKKEHGHDHHGHSSSSDSD</sequence>
<proteinExistence type="evidence at transcript level"/>
<evidence type="ECO:0000250" key="1">
    <source>
        <dbReference type="UniProtKB" id="Q9SLJ2"/>
    </source>
</evidence>
<evidence type="ECO:0000256" key="2">
    <source>
        <dbReference type="SAM" id="MobiDB-lite"/>
    </source>
</evidence>
<evidence type="ECO:0000269" key="3">
    <source>
    </source>
</evidence>
<evidence type="ECO:0000269" key="4">
    <source ref="1"/>
</evidence>
<evidence type="ECO:0000303" key="5">
    <source ref="1"/>
</evidence>
<evidence type="ECO:0000305" key="6"/>
<evidence type="ECO:0000305" key="7">
    <source ref="1"/>
</evidence>
<name>SRC1_SOYBN</name>
<gene>
    <name evidence="5" type="primary">SRC1</name>
    <name evidence="6" type="ordered locus">Glyma17g24193</name>
</gene>
<keyword id="KW-0479">Metal-binding</keyword>
<keyword id="KW-1185">Reference proteome</keyword>
<keyword id="KW-0677">Repeat</keyword>
<keyword id="KW-0346">Stress response</keyword>
<accession>O04132</accession>
<accession>K7MMH0</accession>
<comment type="function">
    <text evidence="1">Intrinsically disordered and metal-binding protein that may play a role in stress responses.</text>
</comment>
<comment type="induction">
    <text evidence="3 4">By cold stress (PubMed:15020631, Ref.1). Induced by heat shock, drought, wounding and infection by soybean mosaic virus (SMV) (Ref.1).</text>
</comment>
<comment type="similarity">
    <text evidence="6">Belongs to the KS-type dehydrin family.</text>
</comment>